<accession>A0AHH9</accession>
<sequence length="204" mass="23610">MTFKGFSKKDFQTMQIPGLEARMAGIQNDIQPKFKAVGEELTTYLSAKLGDEMFLHIARHQRRSVNPPESTWLAICHDKRGYKKHPHFQVGLFDNYLFIWLAFIYENEESAKIANRFLKEKKLLAELPDTFAISPDHTEEKTFPVHDGHLETTLERFRDVKKGEFLVGKIYLPDDSHLSPGKDFIKEAEMVLDKLIPLYKAALQ</sequence>
<proteinExistence type="inferred from homology"/>
<organism>
    <name type="scientific">Listeria welshimeri serovar 6b (strain ATCC 35897 / DSM 20650 / CCUG 15529 / CIP 8149 / NCTC 11857 / SLCC 5334 / V8)</name>
    <dbReference type="NCBI Taxonomy" id="386043"/>
    <lineage>
        <taxon>Bacteria</taxon>
        <taxon>Bacillati</taxon>
        <taxon>Bacillota</taxon>
        <taxon>Bacilli</taxon>
        <taxon>Bacillales</taxon>
        <taxon>Listeriaceae</taxon>
        <taxon>Listeria</taxon>
    </lineage>
</organism>
<evidence type="ECO:0000255" key="1">
    <source>
        <dbReference type="HAMAP-Rule" id="MF_01851"/>
    </source>
</evidence>
<feature type="chain" id="PRO_0000348316" description="UPF0637 protein lwe1043">
    <location>
        <begin position="1"/>
        <end position="204"/>
    </location>
</feature>
<protein>
    <recommendedName>
        <fullName evidence="1">UPF0637 protein lwe1043</fullName>
    </recommendedName>
</protein>
<reference key="1">
    <citation type="journal article" date="2006" name="J. Bacteriol.">
        <title>Whole-genome sequence of Listeria welshimeri reveals common steps in genome reduction with Listeria innocua as compared to Listeria monocytogenes.</title>
        <authorList>
            <person name="Hain T."/>
            <person name="Steinweg C."/>
            <person name="Kuenne C.T."/>
            <person name="Billion A."/>
            <person name="Ghai R."/>
            <person name="Chatterjee S.S."/>
            <person name="Domann E."/>
            <person name="Kaerst U."/>
            <person name="Goesmann A."/>
            <person name="Bekel T."/>
            <person name="Bartels D."/>
            <person name="Kaiser O."/>
            <person name="Meyer F."/>
            <person name="Puehler A."/>
            <person name="Weisshaar B."/>
            <person name="Wehland J."/>
            <person name="Liang C."/>
            <person name="Dandekar T."/>
            <person name="Lampidis R."/>
            <person name="Kreft J."/>
            <person name="Goebel W."/>
            <person name="Chakraborty T."/>
        </authorList>
    </citation>
    <scope>NUCLEOTIDE SEQUENCE [LARGE SCALE GENOMIC DNA]</scope>
    <source>
        <strain>ATCC 35897 / DSM 20650 / CCUG 15529 / CIP 8149 / NCTC 11857 / SLCC 5334 / V8</strain>
    </source>
</reference>
<comment type="similarity">
    <text evidence="1">Belongs to the UPF0637 family.</text>
</comment>
<gene>
    <name type="ordered locus">lwe1043</name>
</gene>
<dbReference type="EMBL" id="AM263198">
    <property type="protein sequence ID" value="CAK20461.1"/>
    <property type="molecule type" value="Genomic_DNA"/>
</dbReference>
<dbReference type="RefSeq" id="WP_011701866.1">
    <property type="nucleotide sequence ID" value="NC_008555.1"/>
</dbReference>
<dbReference type="SMR" id="A0AHH9"/>
<dbReference type="STRING" id="386043.lwe1043"/>
<dbReference type="GeneID" id="61188931"/>
<dbReference type="KEGG" id="lwe:lwe1043"/>
<dbReference type="eggNOG" id="COG4493">
    <property type="taxonomic scope" value="Bacteria"/>
</dbReference>
<dbReference type="HOGENOM" id="CLU_096059_0_0_9"/>
<dbReference type="OrthoDB" id="9812818at2"/>
<dbReference type="Proteomes" id="UP000000779">
    <property type="component" value="Chromosome"/>
</dbReference>
<dbReference type="Gene3D" id="3.30.930.20">
    <property type="entry name" value="Protein of unknown function DUF1054"/>
    <property type="match status" value="1"/>
</dbReference>
<dbReference type="HAMAP" id="MF_01851">
    <property type="entry name" value="UPF0637"/>
    <property type="match status" value="1"/>
</dbReference>
<dbReference type="InterPro" id="IPR009403">
    <property type="entry name" value="UPF0637"/>
</dbReference>
<dbReference type="InterPro" id="IPR053707">
    <property type="entry name" value="UPF0637_domain_sf"/>
</dbReference>
<dbReference type="Pfam" id="PF06335">
    <property type="entry name" value="DUF1054"/>
    <property type="match status" value="1"/>
</dbReference>
<dbReference type="PIRSF" id="PIRSF021332">
    <property type="entry name" value="DUF1054"/>
    <property type="match status" value="1"/>
</dbReference>
<dbReference type="SUPFAM" id="SSF142913">
    <property type="entry name" value="YktB/PF0168-like"/>
    <property type="match status" value="1"/>
</dbReference>
<name>Y1043_LISW6</name>